<proteinExistence type="inferred from homology"/>
<gene>
    <name evidence="1" type="primary">erpA</name>
    <name type="ordered locus">BB4353</name>
</gene>
<accession>Q7WFC7</accession>
<protein>
    <recommendedName>
        <fullName evidence="1">Putative iron-sulfur cluster insertion protein ErpA</fullName>
    </recommendedName>
</protein>
<feature type="chain" id="PRO_0000311450" description="Putative iron-sulfur cluster insertion protein ErpA">
    <location>
        <begin position="1"/>
        <end position="123"/>
    </location>
</feature>
<feature type="binding site" evidence="1">
    <location>
        <position position="51"/>
    </location>
    <ligand>
        <name>iron-sulfur cluster</name>
        <dbReference type="ChEBI" id="CHEBI:30408"/>
    </ligand>
</feature>
<feature type="binding site" evidence="1">
    <location>
        <position position="115"/>
    </location>
    <ligand>
        <name>iron-sulfur cluster</name>
        <dbReference type="ChEBI" id="CHEBI:30408"/>
    </ligand>
</feature>
<feature type="binding site" evidence="1">
    <location>
        <position position="117"/>
    </location>
    <ligand>
        <name>iron-sulfur cluster</name>
        <dbReference type="ChEBI" id="CHEBI:30408"/>
    </ligand>
</feature>
<organism>
    <name type="scientific">Bordetella bronchiseptica (strain ATCC BAA-588 / NCTC 13252 / RB50)</name>
    <name type="common">Alcaligenes bronchisepticus</name>
    <dbReference type="NCBI Taxonomy" id="257310"/>
    <lineage>
        <taxon>Bacteria</taxon>
        <taxon>Pseudomonadati</taxon>
        <taxon>Pseudomonadota</taxon>
        <taxon>Betaproteobacteria</taxon>
        <taxon>Burkholderiales</taxon>
        <taxon>Alcaligenaceae</taxon>
        <taxon>Bordetella</taxon>
    </lineage>
</organism>
<comment type="function">
    <text evidence="1">Required for insertion of 4Fe-4S clusters.</text>
</comment>
<comment type="cofactor">
    <cofactor evidence="1">
        <name>iron-sulfur cluster</name>
        <dbReference type="ChEBI" id="CHEBI:30408"/>
    </cofactor>
    <text evidence="1">Binds 1 iron-sulfur cluster per subunit.</text>
</comment>
<comment type="subunit">
    <text evidence="1">Homodimer.</text>
</comment>
<comment type="similarity">
    <text evidence="1">Belongs to the HesB/IscA family.</text>
</comment>
<sequence length="123" mass="13142">MNAVTETVDLQAPPPVPLVFTDSAAAKVKDLLAEEGNPELKLRVFVQGGGCSGFQYGFTFDEVVNDDDTVLDKAGVQLLVDPMSFQYLVGAEIDYKEDLEGAQFVIRNPNASTTCGCGSSFSV</sequence>
<evidence type="ECO:0000255" key="1">
    <source>
        <dbReference type="HAMAP-Rule" id="MF_01380"/>
    </source>
</evidence>
<name>ERPA_BORBR</name>
<reference key="1">
    <citation type="journal article" date="2003" name="Nat. Genet.">
        <title>Comparative analysis of the genome sequences of Bordetella pertussis, Bordetella parapertussis and Bordetella bronchiseptica.</title>
        <authorList>
            <person name="Parkhill J."/>
            <person name="Sebaihia M."/>
            <person name="Preston A."/>
            <person name="Murphy L.D."/>
            <person name="Thomson N.R."/>
            <person name="Harris D.E."/>
            <person name="Holden M.T.G."/>
            <person name="Churcher C.M."/>
            <person name="Bentley S.D."/>
            <person name="Mungall K.L."/>
            <person name="Cerdeno-Tarraga A.-M."/>
            <person name="Temple L."/>
            <person name="James K.D."/>
            <person name="Harris B."/>
            <person name="Quail M.A."/>
            <person name="Achtman M."/>
            <person name="Atkin R."/>
            <person name="Baker S."/>
            <person name="Basham D."/>
            <person name="Bason N."/>
            <person name="Cherevach I."/>
            <person name="Chillingworth T."/>
            <person name="Collins M."/>
            <person name="Cronin A."/>
            <person name="Davis P."/>
            <person name="Doggett J."/>
            <person name="Feltwell T."/>
            <person name="Goble A."/>
            <person name="Hamlin N."/>
            <person name="Hauser H."/>
            <person name="Holroyd S."/>
            <person name="Jagels K."/>
            <person name="Leather S."/>
            <person name="Moule S."/>
            <person name="Norberczak H."/>
            <person name="O'Neil S."/>
            <person name="Ormond D."/>
            <person name="Price C."/>
            <person name="Rabbinowitsch E."/>
            <person name="Rutter S."/>
            <person name="Sanders M."/>
            <person name="Saunders D."/>
            <person name="Seeger K."/>
            <person name="Sharp S."/>
            <person name="Simmonds M."/>
            <person name="Skelton J."/>
            <person name="Squares R."/>
            <person name="Squares S."/>
            <person name="Stevens K."/>
            <person name="Unwin L."/>
            <person name="Whitehead S."/>
            <person name="Barrell B.G."/>
            <person name="Maskell D.J."/>
        </authorList>
    </citation>
    <scope>NUCLEOTIDE SEQUENCE [LARGE SCALE GENOMIC DNA]</scope>
    <source>
        <strain>ATCC BAA-588 / NCTC 13252 / RB50</strain>
    </source>
</reference>
<dbReference type="EMBL" id="BX640450">
    <property type="protein sequence ID" value="CAE34716.1"/>
    <property type="molecule type" value="Genomic_DNA"/>
</dbReference>
<dbReference type="RefSeq" id="WP_003814883.1">
    <property type="nucleotide sequence ID" value="NC_002927.3"/>
</dbReference>
<dbReference type="SMR" id="Q7WFC7"/>
<dbReference type="GeneID" id="93205680"/>
<dbReference type="KEGG" id="bbr:BB4353"/>
<dbReference type="eggNOG" id="COG0316">
    <property type="taxonomic scope" value="Bacteria"/>
</dbReference>
<dbReference type="HOGENOM" id="CLU_069054_5_3_4"/>
<dbReference type="Proteomes" id="UP000001027">
    <property type="component" value="Chromosome"/>
</dbReference>
<dbReference type="GO" id="GO:0051537">
    <property type="term" value="F:2 iron, 2 sulfur cluster binding"/>
    <property type="evidence" value="ECO:0007669"/>
    <property type="project" value="TreeGrafter"/>
</dbReference>
<dbReference type="GO" id="GO:0051539">
    <property type="term" value="F:4 iron, 4 sulfur cluster binding"/>
    <property type="evidence" value="ECO:0007669"/>
    <property type="project" value="TreeGrafter"/>
</dbReference>
<dbReference type="GO" id="GO:0005506">
    <property type="term" value="F:iron ion binding"/>
    <property type="evidence" value="ECO:0007669"/>
    <property type="project" value="UniProtKB-UniRule"/>
</dbReference>
<dbReference type="GO" id="GO:0016226">
    <property type="term" value="P:iron-sulfur cluster assembly"/>
    <property type="evidence" value="ECO:0007669"/>
    <property type="project" value="UniProtKB-UniRule"/>
</dbReference>
<dbReference type="FunFam" id="2.60.300.12:FF:000002">
    <property type="entry name" value="Iron-sulfur cluster insertion protein ErpA"/>
    <property type="match status" value="1"/>
</dbReference>
<dbReference type="Gene3D" id="2.60.300.12">
    <property type="entry name" value="HesB-like domain"/>
    <property type="match status" value="1"/>
</dbReference>
<dbReference type="HAMAP" id="MF_01380">
    <property type="entry name" value="Fe_S_insert_ErpA"/>
    <property type="match status" value="1"/>
</dbReference>
<dbReference type="InterPro" id="IPR000361">
    <property type="entry name" value="FeS_biogenesis"/>
</dbReference>
<dbReference type="InterPro" id="IPR016092">
    <property type="entry name" value="FeS_cluster_insertion"/>
</dbReference>
<dbReference type="InterPro" id="IPR017870">
    <property type="entry name" value="FeS_cluster_insertion_CS"/>
</dbReference>
<dbReference type="InterPro" id="IPR023063">
    <property type="entry name" value="FeS_cluster_insertion_RrpA"/>
</dbReference>
<dbReference type="InterPro" id="IPR035903">
    <property type="entry name" value="HesB-like_dom_sf"/>
</dbReference>
<dbReference type="NCBIfam" id="TIGR00049">
    <property type="entry name" value="iron-sulfur cluster assembly accessory protein"/>
    <property type="match status" value="1"/>
</dbReference>
<dbReference type="NCBIfam" id="NF010147">
    <property type="entry name" value="PRK13623.1"/>
    <property type="match status" value="1"/>
</dbReference>
<dbReference type="PANTHER" id="PTHR43011">
    <property type="entry name" value="IRON-SULFUR CLUSTER ASSEMBLY 2 HOMOLOG, MITOCHONDRIAL"/>
    <property type="match status" value="1"/>
</dbReference>
<dbReference type="PANTHER" id="PTHR43011:SF1">
    <property type="entry name" value="IRON-SULFUR CLUSTER ASSEMBLY 2 HOMOLOG, MITOCHONDRIAL"/>
    <property type="match status" value="1"/>
</dbReference>
<dbReference type="Pfam" id="PF01521">
    <property type="entry name" value="Fe-S_biosyn"/>
    <property type="match status" value="1"/>
</dbReference>
<dbReference type="SUPFAM" id="SSF89360">
    <property type="entry name" value="HesB-like domain"/>
    <property type="match status" value="1"/>
</dbReference>
<dbReference type="PROSITE" id="PS01152">
    <property type="entry name" value="HESB"/>
    <property type="match status" value="1"/>
</dbReference>
<keyword id="KW-0408">Iron</keyword>
<keyword id="KW-0411">Iron-sulfur</keyword>
<keyword id="KW-0479">Metal-binding</keyword>